<dbReference type="EC" id="7.1.1.-" evidence="1"/>
<dbReference type="EMBL" id="BX248583">
    <property type="protein sequence ID" value="CAD83175.1"/>
    <property type="molecule type" value="Genomic_DNA"/>
</dbReference>
<dbReference type="SMR" id="Q7VRV9"/>
<dbReference type="STRING" id="203907.Bfl486"/>
<dbReference type="KEGG" id="bfl:Bfl486"/>
<dbReference type="eggNOG" id="COG1143">
    <property type="taxonomic scope" value="Bacteria"/>
</dbReference>
<dbReference type="HOGENOM" id="CLU_067218_4_3_6"/>
<dbReference type="Proteomes" id="UP000002192">
    <property type="component" value="Chromosome"/>
</dbReference>
<dbReference type="GO" id="GO:0005886">
    <property type="term" value="C:plasma membrane"/>
    <property type="evidence" value="ECO:0007669"/>
    <property type="project" value="UniProtKB-SubCell"/>
</dbReference>
<dbReference type="GO" id="GO:0051539">
    <property type="term" value="F:4 iron, 4 sulfur cluster binding"/>
    <property type="evidence" value="ECO:0007669"/>
    <property type="project" value="UniProtKB-KW"/>
</dbReference>
<dbReference type="GO" id="GO:0005506">
    <property type="term" value="F:iron ion binding"/>
    <property type="evidence" value="ECO:0007669"/>
    <property type="project" value="UniProtKB-UniRule"/>
</dbReference>
<dbReference type="GO" id="GO:0050136">
    <property type="term" value="F:NADH:ubiquinone reductase (non-electrogenic) activity"/>
    <property type="evidence" value="ECO:0007669"/>
    <property type="project" value="UniProtKB-UniRule"/>
</dbReference>
<dbReference type="GO" id="GO:0048038">
    <property type="term" value="F:quinone binding"/>
    <property type="evidence" value="ECO:0007669"/>
    <property type="project" value="UniProtKB-KW"/>
</dbReference>
<dbReference type="GO" id="GO:0009060">
    <property type="term" value="P:aerobic respiration"/>
    <property type="evidence" value="ECO:0007669"/>
    <property type="project" value="TreeGrafter"/>
</dbReference>
<dbReference type="FunFam" id="3.30.70.3270:FF:000002">
    <property type="entry name" value="NADH-quinone oxidoreductase subunit I"/>
    <property type="match status" value="1"/>
</dbReference>
<dbReference type="Gene3D" id="3.30.70.3270">
    <property type="match status" value="1"/>
</dbReference>
<dbReference type="HAMAP" id="MF_01351">
    <property type="entry name" value="NDH1_NuoI"/>
    <property type="match status" value="1"/>
</dbReference>
<dbReference type="InterPro" id="IPR017896">
    <property type="entry name" value="4Fe4S_Fe-S-bd"/>
</dbReference>
<dbReference type="InterPro" id="IPR017900">
    <property type="entry name" value="4Fe4S_Fe_S_CS"/>
</dbReference>
<dbReference type="InterPro" id="IPR010226">
    <property type="entry name" value="NADH_quinone_OxRdtase_chainI"/>
</dbReference>
<dbReference type="NCBIfam" id="TIGR01971">
    <property type="entry name" value="NuoI"/>
    <property type="match status" value="1"/>
</dbReference>
<dbReference type="NCBIfam" id="NF004536">
    <property type="entry name" value="PRK05888.1-1"/>
    <property type="match status" value="1"/>
</dbReference>
<dbReference type="PANTHER" id="PTHR10849:SF20">
    <property type="entry name" value="NADH DEHYDROGENASE [UBIQUINONE] IRON-SULFUR PROTEIN 8, MITOCHONDRIAL"/>
    <property type="match status" value="1"/>
</dbReference>
<dbReference type="PANTHER" id="PTHR10849">
    <property type="entry name" value="NADH DEHYDROGENASE UBIQUINONE IRON-SULFUR PROTEIN 8, MITOCHONDRIAL"/>
    <property type="match status" value="1"/>
</dbReference>
<dbReference type="Pfam" id="PF12838">
    <property type="entry name" value="Fer4_7"/>
    <property type="match status" value="1"/>
</dbReference>
<dbReference type="SUPFAM" id="SSF54862">
    <property type="entry name" value="4Fe-4S ferredoxins"/>
    <property type="match status" value="1"/>
</dbReference>
<dbReference type="PROSITE" id="PS00198">
    <property type="entry name" value="4FE4S_FER_1"/>
    <property type="match status" value="2"/>
</dbReference>
<dbReference type="PROSITE" id="PS51379">
    <property type="entry name" value="4FE4S_FER_2"/>
    <property type="match status" value="2"/>
</dbReference>
<feature type="chain" id="PRO_0000245700" description="NADH-quinone oxidoreductase subunit I">
    <location>
        <begin position="1"/>
        <end position="181"/>
    </location>
</feature>
<feature type="domain" description="4Fe-4S ferredoxin-type 1" evidence="1">
    <location>
        <begin position="52"/>
        <end position="81"/>
    </location>
</feature>
<feature type="domain" description="4Fe-4S ferredoxin-type 2" evidence="1">
    <location>
        <begin position="91"/>
        <end position="120"/>
    </location>
</feature>
<feature type="binding site" evidence="1">
    <location>
        <position position="61"/>
    </location>
    <ligand>
        <name>[4Fe-4S] cluster</name>
        <dbReference type="ChEBI" id="CHEBI:49883"/>
        <label>1</label>
    </ligand>
</feature>
<feature type="binding site" evidence="1">
    <location>
        <position position="64"/>
    </location>
    <ligand>
        <name>[4Fe-4S] cluster</name>
        <dbReference type="ChEBI" id="CHEBI:49883"/>
        <label>1</label>
    </ligand>
</feature>
<feature type="binding site" evidence="1">
    <location>
        <position position="67"/>
    </location>
    <ligand>
        <name>[4Fe-4S] cluster</name>
        <dbReference type="ChEBI" id="CHEBI:49883"/>
        <label>1</label>
    </ligand>
</feature>
<feature type="binding site" evidence="1">
    <location>
        <position position="71"/>
    </location>
    <ligand>
        <name>[4Fe-4S] cluster</name>
        <dbReference type="ChEBI" id="CHEBI:49883"/>
        <label>2</label>
    </ligand>
</feature>
<feature type="binding site" evidence="1">
    <location>
        <position position="100"/>
    </location>
    <ligand>
        <name>[4Fe-4S] cluster</name>
        <dbReference type="ChEBI" id="CHEBI:49883"/>
        <label>2</label>
    </ligand>
</feature>
<feature type="binding site" evidence="1">
    <location>
        <position position="103"/>
    </location>
    <ligand>
        <name>[4Fe-4S] cluster</name>
        <dbReference type="ChEBI" id="CHEBI:49883"/>
        <label>2</label>
    </ligand>
</feature>
<feature type="binding site" evidence="1">
    <location>
        <position position="106"/>
    </location>
    <ligand>
        <name>[4Fe-4S] cluster</name>
        <dbReference type="ChEBI" id="CHEBI:49883"/>
        <label>2</label>
    </ligand>
</feature>
<feature type="binding site" evidence="1">
    <location>
        <position position="110"/>
    </location>
    <ligand>
        <name>[4Fe-4S] cluster</name>
        <dbReference type="ChEBI" id="CHEBI:49883"/>
        <label>1</label>
    </ligand>
</feature>
<protein>
    <recommendedName>
        <fullName evidence="1">NADH-quinone oxidoreductase subunit I</fullName>
        <ecNumber evidence="1">7.1.1.-</ecNumber>
    </recommendedName>
    <alternativeName>
        <fullName evidence="1">NADH dehydrogenase I subunit I</fullName>
    </alternativeName>
    <alternativeName>
        <fullName evidence="1">NDH-1 subunit I</fullName>
    </alternativeName>
</protein>
<sequence length="181" mass="20892">MMKLKEFFINIISIFRSVYMVGMQAFSKRETYMYPDVACKLSSRYRGRIVLTRDSAGHERCVACNLCAVSCPVGCISLKKSENSEGRWYPEFFRINFSRCIFCGMCEEACPTAAIQLISDFEMSDYKRSDLVYEKSDLLISGPGKYKNYDFYQISGVKYSNKYKKESSFEEKPISVKTILP</sequence>
<reference key="1">
    <citation type="journal article" date="2003" name="Proc. Natl. Acad. Sci. U.S.A.">
        <title>The genome sequence of Blochmannia floridanus: comparative analysis of reduced genomes.</title>
        <authorList>
            <person name="Gil R."/>
            <person name="Silva F.J."/>
            <person name="Zientz E."/>
            <person name="Delmotte F."/>
            <person name="Gonzalez-Candelas F."/>
            <person name="Latorre A."/>
            <person name="Rausell C."/>
            <person name="Kamerbeek J."/>
            <person name="Gadau J."/>
            <person name="Hoelldobler B."/>
            <person name="van Ham R.C.H.J."/>
            <person name="Gross R."/>
            <person name="Moya A."/>
        </authorList>
    </citation>
    <scope>NUCLEOTIDE SEQUENCE [LARGE SCALE GENOMIC DNA]</scope>
</reference>
<gene>
    <name evidence="1" type="primary">nuoI</name>
    <name type="ordered locus">Bfl486</name>
</gene>
<name>NUOI_BLOFL</name>
<accession>Q7VRV9</accession>
<proteinExistence type="inferred from homology"/>
<comment type="function">
    <text evidence="1">NDH-1 shuttles electrons from NADH, via FMN and iron-sulfur (Fe-S) centers, to quinones in the respiratory chain. The immediate electron acceptor for the enzyme in this species is believed to be ubiquinone. Couples the redox reaction to proton translocation (for every two electrons transferred, four hydrogen ions are translocated across the cytoplasmic membrane), and thus conserves the redox energy in a proton gradient.</text>
</comment>
<comment type="catalytic activity">
    <reaction evidence="1">
        <text>a quinone + NADH + 5 H(+)(in) = a quinol + NAD(+) + 4 H(+)(out)</text>
        <dbReference type="Rhea" id="RHEA:57888"/>
        <dbReference type="ChEBI" id="CHEBI:15378"/>
        <dbReference type="ChEBI" id="CHEBI:24646"/>
        <dbReference type="ChEBI" id="CHEBI:57540"/>
        <dbReference type="ChEBI" id="CHEBI:57945"/>
        <dbReference type="ChEBI" id="CHEBI:132124"/>
    </reaction>
</comment>
<comment type="cofactor">
    <cofactor evidence="1">
        <name>[4Fe-4S] cluster</name>
        <dbReference type="ChEBI" id="CHEBI:49883"/>
    </cofactor>
    <text evidence="1">Binds 2 [4Fe-4S] clusters per subunit.</text>
</comment>
<comment type="subunit">
    <text evidence="1">NDH-1 is composed of 13 different subunits. Subunits NuoA, H, J, K, L, M, N constitute the membrane sector of the complex.</text>
</comment>
<comment type="subcellular location">
    <subcellularLocation>
        <location evidence="1">Cell inner membrane</location>
        <topology evidence="1">Peripheral membrane protein</topology>
    </subcellularLocation>
</comment>
<comment type="similarity">
    <text evidence="1">Belongs to the complex I 23 kDa subunit family.</text>
</comment>
<organism>
    <name type="scientific">Blochmanniella floridana</name>
    <dbReference type="NCBI Taxonomy" id="203907"/>
    <lineage>
        <taxon>Bacteria</taxon>
        <taxon>Pseudomonadati</taxon>
        <taxon>Pseudomonadota</taxon>
        <taxon>Gammaproteobacteria</taxon>
        <taxon>Enterobacterales</taxon>
        <taxon>Enterobacteriaceae</taxon>
        <taxon>ant endosymbionts</taxon>
        <taxon>Candidatus Blochmanniella</taxon>
    </lineage>
</organism>
<evidence type="ECO:0000255" key="1">
    <source>
        <dbReference type="HAMAP-Rule" id="MF_01351"/>
    </source>
</evidence>
<keyword id="KW-0004">4Fe-4S</keyword>
<keyword id="KW-0997">Cell inner membrane</keyword>
<keyword id="KW-1003">Cell membrane</keyword>
<keyword id="KW-0408">Iron</keyword>
<keyword id="KW-0411">Iron-sulfur</keyword>
<keyword id="KW-0472">Membrane</keyword>
<keyword id="KW-0479">Metal-binding</keyword>
<keyword id="KW-0520">NAD</keyword>
<keyword id="KW-0874">Quinone</keyword>
<keyword id="KW-1185">Reference proteome</keyword>
<keyword id="KW-0677">Repeat</keyword>
<keyword id="KW-1278">Translocase</keyword>
<keyword id="KW-0830">Ubiquinone</keyword>